<reference key="1">
    <citation type="journal article" date="2007" name="Genome Biol.">
        <title>Characterization and modeling of the Haemophilus influenzae core and supragenomes based on the complete genomic sequences of Rd and 12 clinical nontypeable strains.</title>
        <authorList>
            <person name="Hogg J.S."/>
            <person name="Hu F.Z."/>
            <person name="Janto B."/>
            <person name="Boissy R."/>
            <person name="Hayes J."/>
            <person name="Keefe R."/>
            <person name="Post J.C."/>
            <person name="Ehrlich G.D."/>
        </authorList>
    </citation>
    <scope>NUCLEOTIDE SEQUENCE [LARGE SCALE GENOMIC DNA]</scope>
    <source>
        <strain>PittEE</strain>
    </source>
</reference>
<sequence>MSAFQPTIKRRESTKIYVGNVPIGGDAPIAVQSMTNTRTTDVEATVAQIKSLERVGADIVRVSVPTMDAAEAFKQIKQQVNVPLVADIHFDYRIALKVAEYGVDCLRINPGNIGREDRIRAVVDCARDKNIPIRIGVNAGSLEKDLQEKYGEPTPEALLESALRHVEILDRLNFNQFKVSVKASDVFLAVEAYRLLAKAIKQPLHLGITEAGGARAGAVKSAVGLGMLLAEGIGDTLRVSLAADPIEEIKVGFDILKSLRIRSRGINFIACPTCSRQEFDVIGTVNALEQRLEDIITPMDVSIIGCVVNGPGEALVSDLGVTGGNKKAVIILTANVKKSVLITKI</sequence>
<evidence type="ECO:0000255" key="1">
    <source>
        <dbReference type="HAMAP-Rule" id="MF_00159"/>
    </source>
</evidence>
<gene>
    <name evidence="1" type="primary">ispG</name>
    <name type="ordered locus">CGSHiEE_01170</name>
</gene>
<feature type="chain" id="PRO_1000191085" description="4-hydroxy-3-methylbut-2-en-1-yl diphosphate synthase (flavodoxin)">
    <location>
        <begin position="1"/>
        <end position="345"/>
    </location>
</feature>
<feature type="binding site" evidence="1">
    <location>
        <position position="271"/>
    </location>
    <ligand>
        <name>[4Fe-4S] cluster</name>
        <dbReference type="ChEBI" id="CHEBI:49883"/>
    </ligand>
</feature>
<feature type="binding site" evidence="1">
    <location>
        <position position="274"/>
    </location>
    <ligand>
        <name>[4Fe-4S] cluster</name>
        <dbReference type="ChEBI" id="CHEBI:49883"/>
    </ligand>
</feature>
<feature type="binding site" evidence="1">
    <location>
        <position position="306"/>
    </location>
    <ligand>
        <name>[4Fe-4S] cluster</name>
        <dbReference type="ChEBI" id="CHEBI:49883"/>
    </ligand>
</feature>
<feature type="binding site" evidence="1">
    <location>
        <position position="313"/>
    </location>
    <ligand>
        <name>[4Fe-4S] cluster</name>
        <dbReference type="ChEBI" id="CHEBI:49883"/>
    </ligand>
</feature>
<protein>
    <recommendedName>
        <fullName evidence="1">4-hydroxy-3-methylbut-2-en-1-yl diphosphate synthase (flavodoxin)</fullName>
        <ecNumber evidence="1">1.17.7.3</ecNumber>
    </recommendedName>
    <alternativeName>
        <fullName evidence="1">1-hydroxy-2-methyl-2-(E)-butenyl 4-diphosphate synthase</fullName>
    </alternativeName>
</protein>
<keyword id="KW-0004">4Fe-4S</keyword>
<keyword id="KW-0408">Iron</keyword>
<keyword id="KW-0411">Iron-sulfur</keyword>
<keyword id="KW-0414">Isoprene biosynthesis</keyword>
<keyword id="KW-0479">Metal-binding</keyword>
<keyword id="KW-0560">Oxidoreductase</keyword>
<proteinExistence type="inferred from homology"/>
<name>ISPG_HAEIE</name>
<organism>
    <name type="scientific">Haemophilus influenzae (strain PittEE)</name>
    <dbReference type="NCBI Taxonomy" id="374930"/>
    <lineage>
        <taxon>Bacteria</taxon>
        <taxon>Pseudomonadati</taxon>
        <taxon>Pseudomonadota</taxon>
        <taxon>Gammaproteobacteria</taxon>
        <taxon>Pasteurellales</taxon>
        <taxon>Pasteurellaceae</taxon>
        <taxon>Haemophilus</taxon>
    </lineage>
</organism>
<dbReference type="EC" id="1.17.7.3" evidence="1"/>
<dbReference type="EMBL" id="CP000671">
    <property type="protein sequence ID" value="ABQ97720.1"/>
    <property type="molecule type" value="Genomic_DNA"/>
</dbReference>
<dbReference type="SMR" id="A5UAB9"/>
<dbReference type="KEGG" id="hip:CGSHiEE_01170"/>
<dbReference type="HOGENOM" id="CLU_042258_0_0_6"/>
<dbReference type="UniPathway" id="UPA00056">
    <property type="reaction ID" value="UER00096"/>
</dbReference>
<dbReference type="GO" id="GO:0051539">
    <property type="term" value="F:4 iron, 4 sulfur cluster binding"/>
    <property type="evidence" value="ECO:0007669"/>
    <property type="project" value="UniProtKB-UniRule"/>
</dbReference>
<dbReference type="GO" id="GO:0046429">
    <property type="term" value="F:4-hydroxy-3-methylbut-2-en-1-yl diphosphate synthase activity (ferredoxin)"/>
    <property type="evidence" value="ECO:0007669"/>
    <property type="project" value="UniProtKB-UniRule"/>
</dbReference>
<dbReference type="GO" id="GO:0141197">
    <property type="term" value="F:4-hydroxy-3-methylbut-2-enyl-diphosphate synthase activity (flavodoxin)"/>
    <property type="evidence" value="ECO:0007669"/>
    <property type="project" value="UniProtKB-EC"/>
</dbReference>
<dbReference type="GO" id="GO:0005506">
    <property type="term" value="F:iron ion binding"/>
    <property type="evidence" value="ECO:0007669"/>
    <property type="project" value="InterPro"/>
</dbReference>
<dbReference type="GO" id="GO:0019288">
    <property type="term" value="P:isopentenyl diphosphate biosynthetic process, methylerythritol 4-phosphate pathway"/>
    <property type="evidence" value="ECO:0007669"/>
    <property type="project" value="UniProtKB-UniRule"/>
</dbReference>
<dbReference type="GO" id="GO:0016114">
    <property type="term" value="P:terpenoid biosynthetic process"/>
    <property type="evidence" value="ECO:0007669"/>
    <property type="project" value="InterPro"/>
</dbReference>
<dbReference type="FunFam" id="3.20.20.20:FF:000001">
    <property type="entry name" value="4-hydroxy-3-methylbut-2-en-1-yl diphosphate synthase (flavodoxin)"/>
    <property type="match status" value="1"/>
</dbReference>
<dbReference type="Gene3D" id="3.20.20.20">
    <property type="entry name" value="Dihydropteroate synthase-like"/>
    <property type="match status" value="1"/>
</dbReference>
<dbReference type="Gene3D" id="3.30.413.10">
    <property type="entry name" value="Sulfite Reductase Hemoprotein, domain 1"/>
    <property type="match status" value="1"/>
</dbReference>
<dbReference type="HAMAP" id="MF_00159">
    <property type="entry name" value="IspG"/>
    <property type="match status" value="1"/>
</dbReference>
<dbReference type="InterPro" id="IPR011005">
    <property type="entry name" value="Dihydropteroate_synth-like_sf"/>
</dbReference>
<dbReference type="InterPro" id="IPR016425">
    <property type="entry name" value="IspG_bac"/>
</dbReference>
<dbReference type="InterPro" id="IPR004588">
    <property type="entry name" value="IspG_bac-typ"/>
</dbReference>
<dbReference type="InterPro" id="IPR045854">
    <property type="entry name" value="NO2/SO3_Rdtase_4Fe4S_sf"/>
</dbReference>
<dbReference type="NCBIfam" id="TIGR00612">
    <property type="entry name" value="ispG_gcpE"/>
    <property type="match status" value="1"/>
</dbReference>
<dbReference type="NCBIfam" id="NF001540">
    <property type="entry name" value="PRK00366.1"/>
    <property type="match status" value="1"/>
</dbReference>
<dbReference type="PANTHER" id="PTHR30454">
    <property type="entry name" value="4-HYDROXY-3-METHYLBUT-2-EN-1-YL DIPHOSPHATE SYNTHASE"/>
    <property type="match status" value="1"/>
</dbReference>
<dbReference type="PANTHER" id="PTHR30454:SF0">
    <property type="entry name" value="4-HYDROXY-3-METHYLBUT-2-EN-1-YL DIPHOSPHATE SYNTHASE (FERREDOXIN), CHLOROPLASTIC"/>
    <property type="match status" value="1"/>
</dbReference>
<dbReference type="Pfam" id="PF04551">
    <property type="entry name" value="GcpE"/>
    <property type="match status" value="1"/>
</dbReference>
<dbReference type="PIRSF" id="PIRSF004640">
    <property type="entry name" value="IspG"/>
    <property type="match status" value="1"/>
</dbReference>
<dbReference type="SUPFAM" id="SSF51717">
    <property type="entry name" value="Dihydropteroate synthetase-like"/>
    <property type="match status" value="1"/>
</dbReference>
<dbReference type="SUPFAM" id="SSF56014">
    <property type="entry name" value="Nitrite and sulphite reductase 4Fe-4S domain-like"/>
    <property type="match status" value="1"/>
</dbReference>
<accession>A5UAB9</accession>
<comment type="function">
    <text evidence="1">Converts 2C-methyl-D-erythritol 2,4-cyclodiphosphate (ME-2,4cPP) into 1-hydroxy-2-methyl-2-(E)-butenyl 4-diphosphate.</text>
</comment>
<comment type="catalytic activity">
    <reaction evidence="1">
        <text>(2E)-4-hydroxy-3-methylbut-2-enyl diphosphate + oxidized [flavodoxin] + H2O + 2 H(+) = 2-C-methyl-D-erythritol 2,4-cyclic diphosphate + reduced [flavodoxin]</text>
        <dbReference type="Rhea" id="RHEA:43604"/>
        <dbReference type="Rhea" id="RHEA-COMP:10622"/>
        <dbReference type="Rhea" id="RHEA-COMP:10623"/>
        <dbReference type="ChEBI" id="CHEBI:15377"/>
        <dbReference type="ChEBI" id="CHEBI:15378"/>
        <dbReference type="ChEBI" id="CHEBI:57618"/>
        <dbReference type="ChEBI" id="CHEBI:58210"/>
        <dbReference type="ChEBI" id="CHEBI:58483"/>
        <dbReference type="ChEBI" id="CHEBI:128753"/>
        <dbReference type="EC" id="1.17.7.3"/>
    </reaction>
</comment>
<comment type="cofactor">
    <cofactor evidence="1">
        <name>[4Fe-4S] cluster</name>
        <dbReference type="ChEBI" id="CHEBI:49883"/>
    </cofactor>
    <text evidence="1">Binds 1 [4Fe-4S] cluster.</text>
</comment>
<comment type="pathway">
    <text evidence="1">Isoprenoid biosynthesis; isopentenyl diphosphate biosynthesis via DXP pathway; isopentenyl diphosphate from 1-deoxy-D-xylulose 5-phosphate: step 5/6.</text>
</comment>
<comment type="similarity">
    <text evidence="1">Belongs to the IspG family.</text>
</comment>